<name>MURG_COREF</name>
<comment type="function">
    <text evidence="1">Cell wall formation. Catalyzes the transfer of a GlcNAc subunit on undecaprenyl-pyrophosphoryl-MurNAc-pentapeptide (lipid intermediate I) to form undecaprenyl-pyrophosphoryl-MurNAc-(pentapeptide)GlcNAc (lipid intermediate II).</text>
</comment>
<comment type="catalytic activity">
    <reaction evidence="1">
        <text>di-trans,octa-cis-undecaprenyl diphospho-N-acetyl-alpha-D-muramoyl-L-alanyl-D-glutamyl-meso-2,6-diaminopimeloyl-D-alanyl-D-alanine + UDP-N-acetyl-alpha-D-glucosamine = di-trans,octa-cis-undecaprenyl diphospho-[N-acetyl-alpha-D-glucosaminyl-(1-&gt;4)]-N-acetyl-alpha-D-muramoyl-L-alanyl-D-glutamyl-meso-2,6-diaminopimeloyl-D-alanyl-D-alanine + UDP + H(+)</text>
        <dbReference type="Rhea" id="RHEA:31227"/>
        <dbReference type="ChEBI" id="CHEBI:15378"/>
        <dbReference type="ChEBI" id="CHEBI:57705"/>
        <dbReference type="ChEBI" id="CHEBI:58223"/>
        <dbReference type="ChEBI" id="CHEBI:61387"/>
        <dbReference type="ChEBI" id="CHEBI:61388"/>
        <dbReference type="EC" id="2.4.1.227"/>
    </reaction>
</comment>
<comment type="pathway">
    <text evidence="1">Cell wall biogenesis; peptidoglycan biosynthesis.</text>
</comment>
<comment type="subcellular location">
    <subcellularLocation>
        <location evidence="1">Cell membrane</location>
        <topology evidence="1">Peripheral membrane protein</topology>
        <orientation evidence="1">Cytoplasmic side</orientation>
    </subcellularLocation>
</comment>
<comment type="similarity">
    <text evidence="1">Belongs to the glycosyltransferase 28 family. MurG subfamily.</text>
</comment>
<dbReference type="EC" id="2.4.1.227" evidence="1"/>
<dbReference type="EMBL" id="BA000035">
    <property type="protein sequence ID" value="BAC18863.1"/>
    <property type="molecule type" value="Genomic_DNA"/>
</dbReference>
<dbReference type="RefSeq" id="WP_006768053.1">
    <property type="nucleotide sequence ID" value="NC_004369.1"/>
</dbReference>
<dbReference type="SMR" id="Q8FNU0"/>
<dbReference type="STRING" id="196164.gene:10742481"/>
<dbReference type="CAZy" id="GT28">
    <property type="family name" value="Glycosyltransferase Family 28"/>
</dbReference>
<dbReference type="KEGG" id="cef:CE2053"/>
<dbReference type="eggNOG" id="COG0707">
    <property type="taxonomic scope" value="Bacteria"/>
</dbReference>
<dbReference type="HOGENOM" id="CLU_037404_1_0_11"/>
<dbReference type="OrthoDB" id="9808936at2"/>
<dbReference type="UniPathway" id="UPA00219"/>
<dbReference type="Proteomes" id="UP000001409">
    <property type="component" value="Chromosome"/>
</dbReference>
<dbReference type="GO" id="GO:0005886">
    <property type="term" value="C:plasma membrane"/>
    <property type="evidence" value="ECO:0007669"/>
    <property type="project" value="UniProtKB-SubCell"/>
</dbReference>
<dbReference type="GO" id="GO:0051991">
    <property type="term" value="F:UDP-N-acetyl-D-glucosamine:N-acetylmuramoyl-L-alanyl-D-glutamyl-meso-2,6-diaminopimelyl-D-alanyl-D-alanine-diphosphoundecaprenol 4-beta-N-acetylglucosaminlytransferase activity"/>
    <property type="evidence" value="ECO:0007669"/>
    <property type="project" value="RHEA"/>
</dbReference>
<dbReference type="GO" id="GO:0050511">
    <property type="term" value="F:undecaprenyldiphospho-muramoylpentapeptide beta-N-acetylglucosaminyltransferase activity"/>
    <property type="evidence" value="ECO:0007669"/>
    <property type="project" value="UniProtKB-UniRule"/>
</dbReference>
<dbReference type="GO" id="GO:0005975">
    <property type="term" value="P:carbohydrate metabolic process"/>
    <property type="evidence" value="ECO:0007669"/>
    <property type="project" value="InterPro"/>
</dbReference>
<dbReference type="GO" id="GO:0051301">
    <property type="term" value="P:cell division"/>
    <property type="evidence" value="ECO:0007669"/>
    <property type="project" value="UniProtKB-KW"/>
</dbReference>
<dbReference type="GO" id="GO:0071555">
    <property type="term" value="P:cell wall organization"/>
    <property type="evidence" value="ECO:0007669"/>
    <property type="project" value="UniProtKB-KW"/>
</dbReference>
<dbReference type="GO" id="GO:0030259">
    <property type="term" value="P:lipid glycosylation"/>
    <property type="evidence" value="ECO:0007669"/>
    <property type="project" value="UniProtKB-UniRule"/>
</dbReference>
<dbReference type="GO" id="GO:0009252">
    <property type="term" value="P:peptidoglycan biosynthetic process"/>
    <property type="evidence" value="ECO:0007669"/>
    <property type="project" value="UniProtKB-UniRule"/>
</dbReference>
<dbReference type="GO" id="GO:0008360">
    <property type="term" value="P:regulation of cell shape"/>
    <property type="evidence" value="ECO:0007669"/>
    <property type="project" value="UniProtKB-KW"/>
</dbReference>
<dbReference type="CDD" id="cd03785">
    <property type="entry name" value="GT28_MurG"/>
    <property type="match status" value="1"/>
</dbReference>
<dbReference type="Gene3D" id="3.40.50.2000">
    <property type="entry name" value="Glycogen Phosphorylase B"/>
    <property type="match status" value="2"/>
</dbReference>
<dbReference type="HAMAP" id="MF_00033">
    <property type="entry name" value="MurG"/>
    <property type="match status" value="1"/>
</dbReference>
<dbReference type="InterPro" id="IPR006009">
    <property type="entry name" value="GlcNAc_MurG"/>
</dbReference>
<dbReference type="InterPro" id="IPR007235">
    <property type="entry name" value="Glyco_trans_28_C"/>
</dbReference>
<dbReference type="InterPro" id="IPR004276">
    <property type="entry name" value="GlycoTrans_28_N"/>
</dbReference>
<dbReference type="NCBIfam" id="TIGR01133">
    <property type="entry name" value="murG"/>
    <property type="match status" value="1"/>
</dbReference>
<dbReference type="PANTHER" id="PTHR21015:SF22">
    <property type="entry name" value="GLYCOSYLTRANSFERASE"/>
    <property type="match status" value="1"/>
</dbReference>
<dbReference type="PANTHER" id="PTHR21015">
    <property type="entry name" value="UDP-N-ACETYLGLUCOSAMINE--N-ACETYLMURAMYL-(PENTAPEPTIDE) PYROPHOSPHORYL-UNDECAPRENOL N-ACETYLGLUCOSAMINE TRANSFERASE 1"/>
    <property type="match status" value="1"/>
</dbReference>
<dbReference type="Pfam" id="PF04101">
    <property type="entry name" value="Glyco_tran_28_C"/>
    <property type="match status" value="1"/>
</dbReference>
<dbReference type="Pfam" id="PF03033">
    <property type="entry name" value="Glyco_transf_28"/>
    <property type="match status" value="1"/>
</dbReference>
<dbReference type="SUPFAM" id="SSF53756">
    <property type="entry name" value="UDP-Glycosyltransferase/glycogen phosphorylase"/>
    <property type="match status" value="1"/>
</dbReference>
<accession>Q8FNU0</accession>
<proteinExistence type="inferred from homology"/>
<gene>
    <name evidence="1" type="primary">murG</name>
    <name type="ordered locus">CE2053</name>
</gene>
<sequence length="360" mass="36544">MSSPKEPLSVVVAGGGTAGHIEPALAVAEALRDGYGATVTALGTARGLETSLVPDRGFDLRLIEPVPVPRTPNLDLVKLPFRVAKSLRQARQVLRDTGAHAVVGFGGYVSAPAYLAARSLGIPFFVHEANARAGMANKLGVRLGGVGLNATENSGMPGQVVGIPIRRELAGGEDATAAERGRTQWGLEADRPTVLVTGGSQGSVSINSAVAGALDDLLGAGIQVLHAVGKRNSLPTARPGYVPVPFIEDMQAAYAVADLIVCRSGAMTVAEVTASGIPAIYVPLPHGNGEQALNASAVIAAGAAKLVDDADLTPQRLVSEVRDIVGNPATLHRMSAAARTSTVGDAAGVIAGLVATAAGY</sequence>
<feature type="chain" id="PRO_0000109167" description="UDP-N-acetylglucosamine--N-acetylmuramyl-(pentapeptide) pyrophosphoryl-undecaprenol N-acetylglucosamine transferase">
    <location>
        <begin position="1"/>
        <end position="360"/>
    </location>
</feature>
<feature type="binding site" evidence="1">
    <location>
        <begin position="17"/>
        <end position="19"/>
    </location>
    <ligand>
        <name>UDP-N-acetyl-alpha-D-glucosamine</name>
        <dbReference type="ChEBI" id="CHEBI:57705"/>
    </ligand>
</feature>
<feature type="binding site" evidence="1">
    <location>
        <position position="130"/>
    </location>
    <ligand>
        <name>UDP-N-acetyl-alpha-D-glucosamine</name>
        <dbReference type="ChEBI" id="CHEBI:57705"/>
    </ligand>
</feature>
<feature type="binding site" evidence="1">
    <location>
        <position position="166"/>
    </location>
    <ligand>
        <name>UDP-N-acetyl-alpha-D-glucosamine</name>
        <dbReference type="ChEBI" id="CHEBI:57705"/>
    </ligand>
</feature>
<feature type="binding site" evidence="1">
    <location>
        <position position="200"/>
    </location>
    <ligand>
        <name>UDP-N-acetyl-alpha-D-glucosamine</name>
        <dbReference type="ChEBI" id="CHEBI:57705"/>
    </ligand>
</feature>
<feature type="binding site" evidence="1">
    <location>
        <position position="247"/>
    </location>
    <ligand>
        <name>UDP-N-acetyl-alpha-D-glucosamine</name>
        <dbReference type="ChEBI" id="CHEBI:57705"/>
    </ligand>
</feature>
<feature type="binding site" evidence="1">
    <location>
        <position position="291"/>
    </location>
    <ligand>
        <name>UDP-N-acetyl-alpha-D-glucosamine</name>
        <dbReference type="ChEBI" id="CHEBI:57705"/>
    </ligand>
</feature>
<evidence type="ECO:0000255" key="1">
    <source>
        <dbReference type="HAMAP-Rule" id="MF_00033"/>
    </source>
</evidence>
<reference key="1">
    <citation type="journal article" date="2003" name="Genome Res.">
        <title>Comparative complete genome sequence analysis of the amino acid replacements responsible for the thermostability of Corynebacterium efficiens.</title>
        <authorList>
            <person name="Nishio Y."/>
            <person name="Nakamura Y."/>
            <person name="Kawarabayasi Y."/>
            <person name="Usuda Y."/>
            <person name="Kimura E."/>
            <person name="Sugimoto S."/>
            <person name="Matsui K."/>
            <person name="Yamagishi A."/>
            <person name="Kikuchi H."/>
            <person name="Ikeo K."/>
            <person name="Gojobori T."/>
        </authorList>
    </citation>
    <scope>NUCLEOTIDE SEQUENCE [LARGE SCALE GENOMIC DNA]</scope>
    <source>
        <strain>DSM 44549 / YS-314 / AJ 12310 / JCM 11189 / NBRC 100395</strain>
    </source>
</reference>
<keyword id="KW-0131">Cell cycle</keyword>
<keyword id="KW-0132">Cell division</keyword>
<keyword id="KW-1003">Cell membrane</keyword>
<keyword id="KW-0133">Cell shape</keyword>
<keyword id="KW-0961">Cell wall biogenesis/degradation</keyword>
<keyword id="KW-0328">Glycosyltransferase</keyword>
<keyword id="KW-0472">Membrane</keyword>
<keyword id="KW-0573">Peptidoglycan synthesis</keyword>
<keyword id="KW-1185">Reference proteome</keyword>
<keyword id="KW-0808">Transferase</keyword>
<protein>
    <recommendedName>
        <fullName evidence="1">UDP-N-acetylglucosamine--N-acetylmuramyl-(pentapeptide) pyrophosphoryl-undecaprenol N-acetylglucosamine transferase</fullName>
        <ecNumber evidence="1">2.4.1.227</ecNumber>
    </recommendedName>
    <alternativeName>
        <fullName evidence="1">Undecaprenyl-PP-MurNAc-pentapeptide-UDPGlcNAc GlcNAc transferase</fullName>
    </alternativeName>
</protein>
<organism>
    <name type="scientific">Corynebacterium efficiens (strain DSM 44549 / YS-314 / AJ 12310 / JCM 11189 / NBRC 100395)</name>
    <dbReference type="NCBI Taxonomy" id="196164"/>
    <lineage>
        <taxon>Bacteria</taxon>
        <taxon>Bacillati</taxon>
        <taxon>Actinomycetota</taxon>
        <taxon>Actinomycetes</taxon>
        <taxon>Mycobacteriales</taxon>
        <taxon>Corynebacteriaceae</taxon>
        <taxon>Corynebacterium</taxon>
    </lineage>
</organism>